<organism>
    <name type="scientific">Helicobacter pylori (strain P12)</name>
    <dbReference type="NCBI Taxonomy" id="570508"/>
    <lineage>
        <taxon>Bacteria</taxon>
        <taxon>Pseudomonadati</taxon>
        <taxon>Campylobacterota</taxon>
        <taxon>Epsilonproteobacteria</taxon>
        <taxon>Campylobacterales</taxon>
        <taxon>Helicobacteraceae</taxon>
        <taxon>Helicobacter</taxon>
    </lineage>
</organism>
<proteinExistence type="inferred from homology"/>
<dbReference type="EC" id="6.3.2.1" evidence="1"/>
<dbReference type="EMBL" id="CP001217">
    <property type="protein sequence ID" value="ACJ07166.1"/>
    <property type="molecule type" value="Genomic_DNA"/>
</dbReference>
<dbReference type="SMR" id="B6JPA5"/>
<dbReference type="KEGG" id="hpp:HPP12_0006"/>
<dbReference type="HOGENOM" id="CLU_047148_0_0_7"/>
<dbReference type="UniPathway" id="UPA00028">
    <property type="reaction ID" value="UER00005"/>
</dbReference>
<dbReference type="Proteomes" id="UP000008198">
    <property type="component" value="Chromosome"/>
</dbReference>
<dbReference type="GO" id="GO:0005829">
    <property type="term" value="C:cytosol"/>
    <property type="evidence" value="ECO:0007669"/>
    <property type="project" value="TreeGrafter"/>
</dbReference>
<dbReference type="GO" id="GO:0005524">
    <property type="term" value="F:ATP binding"/>
    <property type="evidence" value="ECO:0007669"/>
    <property type="project" value="UniProtKB-KW"/>
</dbReference>
<dbReference type="GO" id="GO:0004592">
    <property type="term" value="F:pantoate-beta-alanine ligase activity"/>
    <property type="evidence" value="ECO:0007669"/>
    <property type="project" value="UniProtKB-UniRule"/>
</dbReference>
<dbReference type="GO" id="GO:0015940">
    <property type="term" value="P:pantothenate biosynthetic process"/>
    <property type="evidence" value="ECO:0007669"/>
    <property type="project" value="UniProtKB-UniRule"/>
</dbReference>
<dbReference type="CDD" id="cd00560">
    <property type="entry name" value="PanC"/>
    <property type="match status" value="1"/>
</dbReference>
<dbReference type="FunFam" id="3.40.50.620:FF:000114">
    <property type="entry name" value="Pantothenate synthetase"/>
    <property type="match status" value="1"/>
</dbReference>
<dbReference type="Gene3D" id="3.40.50.620">
    <property type="entry name" value="HUPs"/>
    <property type="match status" value="1"/>
</dbReference>
<dbReference type="Gene3D" id="3.30.1300.10">
    <property type="entry name" value="Pantoate-beta-alanine ligase, C-terminal domain"/>
    <property type="match status" value="1"/>
</dbReference>
<dbReference type="HAMAP" id="MF_00158">
    <property type="entry name" value="PanC"/>
    <property type="match status" value="1"/>
</dbReference>
<dbReference type="InterPro" id="IPR004821">
    <property type="entry name" value="Cyt_trans-like"/>
</dbReference>
<dbReference type="InterPro" id="IPR003721">
    <property type="entry name" value="Pantoate_ligase"/>
</dbReference>
<dbReference type="InterPro" id="IPR042176">
    <property type="entry name" value="Pantoate_ligase_C"/>
</dbReference>
<dbReference type="InterPro" id="IPR014729">
    <property type="entry name" value="Rossmann-like_a/b/a_fold"/>
</dbReference>
<dbReference type="NCBIfam" id="TIGR00125">
    <property type="entry name" value="cyt_tran_rel"/>
    <property type="match status" value="1"/>
</dbReference>
<dbReference type="NCBIfam" id="TIGR00018">
    <property type="entry name" value="panC"/>
    <property type="match status" value="1"/>
</dbReference>
<dbReference type="PANTHER" id="PTHR21299">
    <property type="entry name" value="CYTIDYLATE KINASE/PANTOATE-BETA-ALANINE LIGASE"/>
    <property type="match status" value="1"/>
</dbReference>
<dbReference type="PANTHER" id="PTHR21299:SF1">
    <property type="entry name" value="PANTOATE--BETA-ALANINE LIGASE"/>
    <property type="match status" value="1"/>
</dbReference>
<dbReference type="Pfam" id="PF02569">
    <property type="entry name" value="Pantoate_ligase"/>
    <property type="match status" value="1"/>
</dbReference>
<dbReference type="SUPFAM" id="SSF52374">
    <property type="entry name" value="Nucleotidylyl transferase"/>
    <property type="match status" value="1"/>
</dbReference>
<feature type="chain" id="PRO_1000097072" description="Pantothenate synthetase">
    <location>
        <begin position="1"/>
        <end position="276"/>
    </location>
</feature>
<feature type="active site" description="Proton donor" evidence="1">
    <location>
        <position position="34"/>
    </location>
</feature>
<feature type="binding site" evidence="1">
    <location>
        <begin position="27"/>
        <end position="34"/>
    </location>
    <ligand>
        <name>ATP</name>
        <dbReference type="ChEBI" id="CHEBI:30616"/>
    </ligand>
</feature>
<feature type="binding site" evidence="1">
    <location>
        <position position="58"/>
    </location>
    <ligand>
        <name>(R)-pantoate</name>
        <dbReference type="ChEBI" id="CHEBI:15980"/>
    </ligand>
</feature>
<feature type="binding site" evidence="1">
    <location>
        <position position="58"/>
    </location>
    <ligand>
        <name>beta-alanine</name>
        <dbReference type="ChEBI" id="CHEBI:57966"/>
    </ligand>
</feature>
<feature type="binding site" evidence="1">
    <location>
        <begin position="147"/>
        <end position="150"/>
    </location>
    <ligand>
        <name>ATP</name>
        <dbReference type="ChEBI" id="CHEBI:30616"/>
    </ligand>
</feature>
<feature type="binding site" evidence="1">
    <location>
        <position position="153"/>
    </location>
    <ligand>
        <name>(R)-pantoate</name>
        <dbReference type="ChEBI" id="CHEBI:15980"/>
    </ligand>
</feature>
<feature type="binding site" evidence="1">
    <location>
        <position position="176"/>
    </location>
    <ligand>
        <name>ATP</name>
        <dbReference type="ChEBI" id="CHEBI:30616"/>
    </ligand>
</feature>
<feature type="binding site" evidence="1">
    <location>
        <begin position="184"/>
        <end position="187"/>
    </location>
    <ligand>
        <name>ATP</name>
        <dbReference type="ChEBI" id="CHEBI:30616"/>
    </ligand>
</feature>
<sequence>MRVLETIAVLREYRKSLKESVGFVPTMGALHRGHQSLIERSLKENSHTIVSVFVNPTQFGANEDFSAYPRPLEKDLALCEKLGVSAVFVPKVSEMYPYEIEQRLKLYAPTFLSHSLEGAVRHGHFDGVVQVVLRLFHLVNPTRAYFGKKDAQQLLIIEHLVKDLLLDIEIAPCEIARDSDHLALSSRNVYLNATERKQALAIPKALENIKQAIDKGEKACEKLKKLGLEILETLEVDYLEFCNHKLEPLKTIEPANTLVLVAARVGKTRLLDNLWV</sequence>
<evidence type="ECO:0000255" key="1">
    <source>
        <dbReference type="HAMAP-Rule" id="MF_00158"/>
    </source>
</evidence>
<accession>B6JPA5</accession>
<protein>
    <recommendedName>
        <fullName evidence="1">Pantothenate synthetase</fullName>
        <shortName evidence="1">PS</shortName>
        <ecNumber evidence="1">6.3.2.1</ecNumber>
    </recommendedName>
    <alternativeName>
        <fullName evidence="1">Pantoate--beta-alanine ligase</fullName>
    </alternativeName>
    <alternativeName>
        <fullName evidence="1">Pantoate-activating enzyme</fullName>
    </alternativeName>
</protein>
<gene>
    <name evidence="1" type="primary">panC</name>
    <name type="ordered locus">HPP12_0006</name>
</gene>
<name>PANC_HELP2</name>
<reference key="1">
    <citation type="submission" date="2008-10" db="EMBL/GenBank/DDBJ databases">
        <title>The complete genome sequence of Helicobacter pylori strain P12.</title>
        <authorList>
            <person name="Fischer W."/>
            <person name="Windhager L."/>
            <person name="Karnholz A."/>
            <person name="Zeiller M."/>
            <person name="Zimmer R."/>
            <person name="Haas R."/>
        </authorList>
    </citation>
    <scope>NUCLEOTIDE SEQUENCE [LARGE SCALE GENOMIC DNA]</scope>
    <source>
        <strain>P12</strain>
    </source>
</reference>
<comment type="function">
    <text evidence="1">Catalyzes the condensation of pantoate with beta-alanine in an ATP-dependent reaction via a pantoyl-adenylate intermediate.</text>
</comment>
<comment type="catalytic activity">
    <reaction evidence="1">
        <text>(R)-pantoate + beta-alanine + ATP = (R)-pantothenate + AMP + diphosphate + H(+)</text>
        <dbReference type="Rhea" id="RHEA:10912"/>
        <dbReference type="ChEBI" id="CHEBI:15378"/>
        <dbReference type="ChEBI" id="CHEBI:15980"/>
        <dbReference type="ChEBI" id="CHEBI:29032"/>
        <dbReference type="ChEBI" id="CHEBI:30616"/>
        <dbReference type="ChEBI" id="CHEBI:33019"/>
        <dbReference type="ChEBI" id="CHEBI:57966"/>
        <dbReference type="ChEBI" id="CHEBI:456215"/>
        <dbReference type="EC" id="6.3.2.1"/>
    </reaction>
</comment>
<comment type="pathway">
    <text evidence="1">Cofactor biosynthesis; (R)-pantothenate biosynthesis; (R)-pantothenate from (R)-pantoate and beta-alanine: step 1/1.</text>
</comment>
<comment type="subunit">
    <text evidence="1">Homodimer.</text>
</comment>
<comment type="subcellular location">
    <subcellularLocation>
        <location evidence="1">Cytoplasm</location>
    </subcellularLocation>
</comment>
<comment type="miscellaneous">
    <text evidence="1">The reaction proceeds by a bi uni uni bi ping pong mechanism.</text>
</comment>
<comment type="similarity">
    <text evidence="1">Belongs to the pantothenate synthetase family.</text>
</comment>
<keyword id="KW-0067">ATP-binding</keyword>
<keyword id="KW-0963">Cytoplasm</keyword>
<keyword id="KW-0436">Ligase</keyword>
<keyword id="KW-0547">Nucleotide-binding</keyword>
<keyword id="KW-0566">Pantothenate biosynthesis</keyword>